<keyword id="KW-1185">Reference proteome</keyword>
<keyword id="KW-0808">Transferase</keyword>
<keyword id="KW-0819">tRNA processing</keyword>
<comment type="function">
    <text evidence="1">Catalyzes carboxymethyl transfer from carboxy-S-adenosyl-L-methionine (Cx-SAM) to 5-hydroxyuridine (ho5U) to form 5-carboxymethoxyuridine (cmo5U) at position 34 in tRNAs.</text>
</comment>
<comment type="catalytic activity">
    <reaction evidence="1">
        <text>carboxy-S-adenosyl-L-methionine + 5-hydroxyuridine(34) in tRNA = 5-carboxymethoxyuridine(34) in tRNA + S-adenosyl-L-homocysteine + H(+)</text>
        <dbReference type="Rhea" id="RHEA:52848"/>
        <dbReference type="Rhea" id="RHEA-COMP:13381"/>
        <dbReference type="Rhea" id="RHEA-COMP:13383"/>
        <dbReference type="ChEBI" id="CHEBI:15378"/>
        <dbReference type="ChEBI" id="CHEBI:57856"/>
        <dbReference type="ChEBI" id="CHEBI:134278"/>
        <dbReference type="ChEBI" id="CHEBI:136877"/>
        <dbReference type="ChEBI" id="CHEBI:136879"/>
    </reaction>
</comment>
<comment type="subunit">
    <text evidence="1">Homotetramer.</text>
</comment>
<comment type="similarity">
    <text evidence="1">Belongs to the class I-like SAM-binding methyltransferase superfamily. CmoB family.</text>
</comment>
<sequence>MISFSSFYKQIADSSLQHWLETLPAILGQWQREHKHGTLPKWEKVLNKLHYPTPDIIDLKNSVSIGSGQQLAKGEREKLENLLRIFQPWRKGPFSVHGIDIDTEWRSDWKWERILPHLSPLNNRTVLDVGCGSGYHMWRMLGEGAKHVVGIDPSTLFLCQFEAIKRLAGDHHPVHLLPLGIEELPPLDAFDTVFSMGVLYHRRSPIDHLLQLRDQLRTGGELVLETLVIDGDENTVLVPEDRYGKMNNVWFLPSAAALELWLKKADFIDIKCVDIDVTSLAEQRSTDWMPNESLVDYLDPTNVDLTVEGYPAPKRATFIATKNQPNKDLT</sequence>
<organism>
    <name type="scientific">Shewanella sediminis (strain HAW-EB3)</name>
    <dbReference type="NCBI Taxonomy" id="425104"/>
    <lineage>
        <taxon>Bacteria</taxon>
        <taxon>Pseudomonadati</taxon>
        <taxon>Pseudomonadota</taxon>
        <taxon>Gammaproteobacteria</taxon>
        <taxon>Alteromonadales</taxon>
        <taxon>Shewanellaceae</taxon>
        <taxon>Shewanella</taxon>
    </lineage>
</organism>
<name>CMOB_SHESH</name>
<protein>
    <recommendedName>
        <fullName evidence="1">tRNA U34 carboxymethyltransferase</fullName>
        <ecNumber evidence="1">2.5.1.-</ecNumber>
    </recommendedName>
</protein>
<accession>A8FUW3</accession>
<evidence type="ECO:0000255" key="1">
    <source>
        <dbReference type="HAMAP-Rule" id="MF_01590"/>
    </source>
</evidence>
<gene>
    <name evidence="1" type="primary">cmoB</name>
    <name type="ordered locus">Ssed_2027</name>
</gene>
<feature type="chain" id="PRO_1000087975" description="tRNA U34 carboxymethyltransferase">
    <location>
        <begin position="1"/>
        <end position="330"/>
    </location>
</feature>
<feature type="binding site" evidence="1">
    <location>
        <position position="91"/>
    </location>
    <ligand>
        <name>carboxy-S-adenosyl-L-methionine</name>
        <dbReference type="ChEBI" id="CHEBI:134278"/>
    </ligand>
</feature>
<feature type="binding site" evidence="1">
    <location>
        <position position="105"/>
    </location>
    <ligand>
        <name>carboxy-S-adenosyl-L-methionine</name>
        <dbReference type="ChEBI" id="CHEBI:134278"/>
    </ligand>
</feature>
<feature type="binding site" evidence="1">
    <location>
        <position position="110"/>
    </location>
    <ligand>
        <name>carboxy-S-adenosyl-L-methionine</name>
        <dbReference type="ChEBI" id="CHEBI:134278"/>
    </ligand>
</feature>
<feature type="binding site" evidence="1">
    <location>
        <position position="130"/>
    </location>
    <ligand>
        <name>carboxy-S-adenosyl-L-methionine</name>
        <dbReference type="ChEBI" id="CHEBI:134278"/>
    </ligand>
</feature>
<feature type="binding site" evidence="1">
    <location>
        <begin position="152"/>
        <end position="154"/>
    </location>
    <ligand>
        <name>carboxy-S-adenosyl-L-methionine</name>
        <dbReference type="ChEBI" id="CHEBI:134278"/>
    </ligand>
</feature>
<feature type="binding site" evidence="1">
    <location>
        <begin position="181"/>
        <end position="182"/>
    </location>
    <ligand>
        <name>carboxy-S-adenosyl-L-methionine</name>
        <dbReference type="ChEBI" id="CHEBI:134278"/>
    </ligand>
</feature>
<feature type="binding site" evidence="1">
    <location>
        <position position="196"/>
    </location>
    <ligand>
        <name>carboxy-S-adenosyl-L-methionine</name>
        <dbReference type="ChEBI" id="CHEBI:134278"/>
    </ligand>
</feature>
<feature type="binding site" evidence="1">
    <location>
        <position position="200"/>
    </location>
    <ligand>
        <name>carboxy-S-adenosyl-L-methionine</name>
        <dbReference type="ChEBI" id="CHEBI:134278"/>
    </ligand>
</feature>
<feature type="binding site" evidence="1">
    <location>
        <position position="315"/>
    </location>
    <ligand>
        <name>carboxy-S-adenosyl-L-methionine</name>
        <dbReference type="ChEBI" id="CHEBI:134278"/>
    </ligand>
</feature>
<reference key="1">
    <citation type="submission" date="2007-08" db="EMBL/GenBank/DDBJ databases">
        <title>Complete sequence of Shewanella sediminis HAW-EB3.</title>
        <authorList>
            <consortium name="US DOE Joint Genome Institute"/>
            <person name="Copeland A."/>
            <person name="Lucas S."/>
            <person name="Lapidus A."/>
            <person name="Barry K."/>
            <person name="Glavina del Rio T."/>
            <person name="Dalin E."/>
            <person name="Tice H."/>
            <person name="Pitluck S."/>
            <person name="Chertkov O."/>
            <person name="Brettin T."/>
            <person name="Bruce D."/>
            <person name="Detter J.C."/>
            <person name="Han C."/>
            <person name="Schmutz J."/>
            <person name="Larimer F."/>
            <person name="Land M."/>
            <person name="Hauser L."/>
            <person name="Kyrpides N."/>
            <person name="Kim E."/>
            <person name="Zhao J.-S."/>
            <person name="Richardson P."/>
        </authorList>
    </citation>
    <scope>NUCLEOTIDE SEQUENCE [LARGE SCALE GENOMIC DNA]</scope>
    <source>
        <strain>HAW-EB3</strain>
    </source>
</reference>
<proteinExistence type="inferred from homology"/>
<dbReference type="EC" id="2.5.1.-" evidence="1"/>
<dbReference type="EMBL" id="CP000821">
    <property type="protein sequence ID" value="ABV36636.1"/>
    <property type="molecule type" value="Genomic_DNA"/>
</dbReference>
<dbReference type="RefSeq" id="WP_012142371.1">
    <property type="nucleotide sequence ID" value="NC_009831.1"/>
</dbReference>
<dbReference type="SMR" id="A8FUW3"/>
<dbReference type="STRING" id="425104.Ssed_2027"/>
<dbReference type="KEGG" id="sse:Ssed_2027"/>
<dbReference type="eggNOG" id="COG0500">
    <property type="taxonomic scope" value="Bacteria"/>
</dbReference>
<dbReference type="HOGENOM" id="CLU_052665_0_0_6"/>
<dbReference type="OrthoDB" id="9773188at2"/>
<dbReference type="Proteomes" id="UP000002015">
    <property type="component" value="Chromosome"/>
</dbReference>
<dbReference type="GO" id="GO:0008168">
    <property type="term" value="F:methyltransferase activity"/>
    <property type="evidence" value="ECO:0007669"/>
    <property type="project" value="TreeGrafter"/>
</dbReference>
<dbReference type="GO" id="GO:0016765">
    <property type="term" value="F:transferase activity, transferring alkyl or aryl (other than methyl) groups"/>
    <property type="evidence" value="ECO:0007669"/>
    <property type="project" value="UniProtKB-UniRule"/>
</dbReference>
<dbReference type="GO" id="GO:0002098">
    <property type="term" value="P:tRNA wobble uridine modification"/>
    <property type="evidence" value="ECO:0007669"/>
    <property type="project" value="InterPro"/>
</dbReference>
<dbReference type="CDD" id="cd02440">
    <property type="entry name" value="AdoMet_MTases"/>
    <property type="match status" value="1"/>
</dbReference>
<dbReference type="Gene3D" id="3.40.50.150">
    <property type="entry name" value="Vaccinia Virus protein VP39"/>
    <property type="match status" value="1"/>
</dbReference>
<dbReference type="HAMAP" id="MF_01590">
    <property type="entry name" value="tRNA_carboxymethyltr_CmoB"/>
    <property type="match status" value="1"/>
</dbReference>
<dbReference type="InterPro" id="IPR010017">
    <property type="entry name" value="CmoB"/>
</dbReference>
<dbReference type="InterPro" id="IPR027555">
    <property type="entry name" value="Mo5U34_MeTrfas-like"/>
</dbReference>
<dbReference type="InterPro" id="IPR029063">
    <property type="entry name" value="SAM-dependent_MTases_sf"/>
</dbReference>
<dbReference type="NCBIfam" id="NF011650">
    <property type="entry name" value="PRK15068.1"/>
    <property type="match status" value="1"/>
</dbReference>
<dbReference type="NCBIfam" id="TIGR00452">
    <property type="entry name" value="tRNA 5-methoxyuridine(34)/uridine 5-oxyacetic acid(34) synthase CmoB"/>
    <property type="match status" value="1"/>
</dbReference>
<dbReference type="PANTHER" id="PTHR43464">
    <property type="entry name" value="METHYLTRANSFERASE"/>
    <property type="match status" value="1"/>
</dbReference>
<dbReference type="PANTHER" id="PTHR43464:SF95">
    <property type="entry name" value="TRNA U34 CARBOXYMETHYLTRANSFERASE"/>
    <property type="match status" value="1"/>
</dbReference>
<dbReference type="Pfam" id="PF08003">
    <property type="entry name" value="Methyltransf_9"/>
    <property type="match status" value="1"/>
</dbReference>
<dbReference type="SUPFAM" id="SSF53335">
    <property type="entry name" value="S-adenosyl-L-methionine-dependent methyltransferases"/>
    <property type="match status" value="1"/>
</dbReference>